<reference key="1">
    <citation type="journal article" date="2004" name="Proc. Natl. Acad. Sci. U.S.A.">
        <title>The louse-borne human pathogen Bartonella quintana is a genomic derivative of the zoonotic agent Bartonella henselae.</title>
        <authorList>
            <person name="Alsmark U.C.M."/>
            <person name="Frank A.C."/>
            <person name="Karlberg E.O."/>
            <person name="Legault B.-A."/>
            <person name="Ardell D.H."/>
            <person name="Canbaeck B."/>
            <person name="Eriksson A.-S."/>
            <person name="Naeslund A.K."/>
            <person name="Handley S.A."/>
            <person name="Huvet M."/>
            <person name="La Scola B."/>
            <person name="Holmberg M."/>
            <person name="Andersson S.G.E."/>
        </authorList>
    </citation>
    <scope>NUCLEOTIDE SEQUENCE [LARGE SCALE GENOMIC DNA]</scope>
    <source>
        <strain>Toulouse</strain>
    </source>
</reference>
<accession>Q6G1F7</accession>
<gene>
    <name evidence="1" type="primary">argB</name>
    <name type="ordered locus">BQ00620</name>
</gene>
<keyword id="KW-0028">Amino-acid biosynthesis</keyword>
<keyword id="KW-0055">Arginine biosynthesis</keyword>
<keyword id="KW-0067">ATP-binding</keyword>
<keyword id="KW-0963">Cytoplasm</keyword>
<keyword id="KW-0418">Kinase</keyword>
<keyword id="KW-0547">Nucleotide-binding</keyword>
<keyword id="KW-0808">Transferase</keyword>
<sequence length="301" mass="32215">MDNVENCAADVFERQAAFLSSALPYMQKYENETVVVKYGGHAMGDSTLGRAFARDIALLKQSGINPVVVHGGGPQIAEILMKMGIESRFENGLRVTDERIVEVVEMVLAGSINKEIVALINAEGEWAIGLCGKDGNMVFAEKAYKTVIDPDSHIERVLDLGFVGEPVEVDRTLLDLLACSEMIPVLAPVAPGHDGKTYNINADIFAGAIAGALEAKRLLFLTDVPGVLNKKGKLLKELTISEVENLIKNGTISGGMIPKVETCMKALQNGVEGVVILNGKTPHSVLLELFTEQGAGTLIVS</sequence>
<organism>
    <name type="scientific">Bartonella quintana (strain Toulouse)</name>
    <name type="common">Rochalimaea quintana</name>
    <dbReference type="NCBI Taxonomy" id="283165"/>
    <lineage>
        <taxon>Bacteria</taxon>
        <taxon>Pseudomonadati</taxon>
        <taxon>Pseudomonadota</taxon>
        <taxon>Alphaproteobacteria</taxon>
        <taxon>Hyphomicrobiales</taxon>
        <taxon>Bartonellaceae</taxon>
        <taxon>Bartonella</taxon>
    </lineage>
</organism>
<dbReference type="EC" id="2.7.2.8" evidence="1"/>
<dbReference type="EMBL" id="BX897700">
    <property type="protein sequence ID" value="CAF25569.1"/>
    <property type="molecule type" value="Genomic_DNA"/>
</dbReference>
<dbReference type="RefSeq" id="WP_011178896.1">
    <property type="nucleotide sequence ID" value="NC_005955.1"/>
</dbReference>
<dbReference type="SMR" id="Q6G1F7"/>
<dbReference type="KEGG" id="bqu:BQ00620"/>
<dbReference type="eggNOG" id="COG0548">
    <property type="taxonomic scope" value="Bacteria"/>
</dbReference>
<dbReference type="HOGENOM" id="CLU_053680_0_0_5"/>
<dbReference type="OrthoDB" id="9803155at2"/>
<dbReference type="UniPathway" id="UPA00068">
    <property type="reaction ID" value="UER00107"/>
</dbReference>
<dbReference type="Proteomes" id="UP000000597">
    <property type="component" value="Chromosome"/>
</dbReference>
<dbReference type="GO" id="GO:0005737">
    <property type="term" value="C:cytoplasm"/>
    <property type="evidence" value="ECO:0007669"/>
    <property type="project" value="UniProtKB-SubCell"/>
</dbReference>
<dbReference type="GO" id="GO:0003991">
    <property type="term" value="F:acetylglutamate kinase activity"/>
    <property type="evidence" value="ECO:0007669"/>
    <property type="project" value="UniProtKB-UniRule"/>
</dbReference>
<dbReference type="GO" id="GO:0005524">
    <property type="term" value="F:ATP binding"/>
    <property type="evidence" value="ECO:0007669"/>
    <property type="project" value="UniProtKB-UniRule"/>
</dbReference>
<dbReference type="GO" id="GO:0042450">
    <property type="term" value="P:arginine biosynthetic process via ornithine"/>
    <property type="evidence" value="ECO:0007669"/>
    <property type="project" value="UniProtKB-UniRule"/>
</dbReference>
<dbReference type="GO" id="GO:0006526">
    <property type="term" value="P:L-arginine biosynthetic process"/>
    <property type="evidence" value="ECO:0007669"/>
    <property type="project" value="UniProtKB-UniPathway"/>
</dbReference>
<dbReference type="CDD" id="cd04250">
    <property type="entry name" value="AAK_NAGK-C"/>
    <property type="match status" value="1"/>
</dbReference>
<dbReference type="FunFam" id="3.40.1160.10:FF:000004">
    <property type="entry name" value="Acetylglutamate kinase"/>
    <property type="match status" value="1"/>
</dbReference>
<dbReference type="Gene3D" id="3.40.1160.10">
    <property type="entry name" value="Acetylglutamate kinase-like"/>
    <property type="match status" value="1"/>
</dbReference>
<dbReference type="HAMAP" id="MF_00082">
    <property type="entry name" value="ArgB"/>
    <property type="match status" value="1"/>
</dbReference>
<dbReference type="InterPro" id="IPR036393">
    <property type="entry name" value="AceGlu_kinase-like_sf"/>
</dbReference>
<dbReference type="InterPro" id="IPR004662">
    <property type="entry name" value="AcgluKinase_fam"/>
</dbReference>
<dbReference type="InterPro" id="IPR037528">
    <property type="entry name" value="ArgB"/>
</dbReference>
<dbReference type="InterPro" id="IPR001048">
    <property type="entry name" value="Asp/Glu/Uridylate_kinase"/>
</dbReference>
<dbReference type="InterPro" id="IPR001057">
    <property type="entry name" value="Glu/AcGlu_kinase"/>
</dbReference>
<dbReference type="InterPro" id="IPR041727">
    <property type="entry name" value="NAGK-C"/>
</dbReference>
<dbReference type="NCBIfam" id="TIGR00761">
    <property type="entry name" value="argB"/>
    <property type="match status" value="1"/>
</dbReference>
<dbReference type="PANTHER" id="PTHR23342">
    <property type="entry name" value="N-ACETYLGLUTAMATE SYNTHASE"/>
    <property type="match status" value="1"/>
</dbReference>
<dbReference type="PANTHER" id="PTHR23342:SF0">
    <property type="entry name" value="N-ACETYLGLUTAMATE SYNTHASE, MITOCHONDRIAL"/>
    <property type="match status" value="1"/>
</dbReference>
<dbReference type="Pfam" id="PF00696">
    <property type="entry name" value="AA_kinase"/>
    <property type="match status" value="1"/>
</dbReference>
<dbReference type="PIRSF" id="PIRSF000728">
    <property type="entry name" value="NAGK"/>
    <property type="match status" value="1"/>
</dbReference>
<dbReference type="PRINTS" id="PR00474">
    <property type="entry name" value="GLU5KINASE"/>
</dbReference>
<dbReference type="SUPFAM" id="SSF53633">
    <property type="entry name" value="Carbamate kinase-like"/>
    <property type="match status" value="1"/>
</dbReference>
<comment type="function">
    <text evidence="1">Catalyzes the ATP-dependent phosphorylation of N-acetyl-L-glutamate.</text>
</comment>
<comment type="catalytic activity">
    <reaction evidence="1">
        <text>N-acetyl-L-glutamate + ATP = N-acetyl-L-glutamyl 5-phosphate + ADP</text>
        <dbReference type="Rhea" id="RHEA:14629"/>
        <dbReference type="ChEBI" id="CHEBI:30616"/>
        <dbReference type="ChEBI" id="CHEBI:44337"/>
        <dbReference type="ChEBI" id="CHEBI:57936"/>
        <dbReference type="ChEBI" id="CHEBI:456216"/>
        <dbReference type="EC" id="2.7.2.8"/>
    </reaction>
</comment>
<comment type="pathway">
    <text evidence="1">Amino-acid biosynthesis; L-arginine biosynthesis; N(2)-acetyl-L-ornithine from L-glutamate: step 2/4.</text>
</comment>
<comment type="subcellular location">
    <subcellularLocation>
        <location evidence="1">Cytoplasm</location>
    </subcellularLocation>
</comment>
<comment type="similarity">
    <text evidence="1">Belongs to the acetylglutamate kinase family. ArgB subfamily.</text>
</comment>
<proteinExistence type="inferred from homology"/>
<evidence type="ECO:0000255" key="1">
    <source>
        <dbReference type="HAMAP-Rule" id="MF_00082"/>
    </source>
</evidence>
<feature type="chain" id="PRO_0000112590" description="Acetylglutamate kinase">
    <location>
        <begin position="1"/>
        <end position="301"/>
    </location>
</feature>
<feature type="binding site" evidence="1">
    <location>
        <begin position="72"/>
        <end position="73"/>
    </location>
    <ligand>
        <name>substrate</name>
    </ligand>
</feature>
<feature type="binding site" evidence="1">
    <location>
        <position position="94"/>
    </location>
    <ligand>
        <name>substrate</name>
    </ligand>
</feature>
<feature type="binding site" evidence="1">
    <location>
        <position position="199"/>
    </location>
    <ligand>
        <name>substrate</name>
    </ligand>
</feature>
<feature type="site" description="Transition state stabilizer" evidence="1">
    <location>
        <position position="37"/>
    </location>
</feature>
<feature type="site" description="Transition state stabilizer" evidence="1">
    <location>
        <position position="259"/>
    </location>
</feature>
<name>ARGB_BARQU</name>
<protein>
    <recommendedName>
        <fullName evidence="1">Acetylglutamate kinase</fullName>
        <ecNumber evidence="1">2.7.2.8</ecNumber>
    </recommendedName>
    <alternativeName>
        <fullName evidence="1">N-acetyl-L-glutamate 5-phosphotransferase</fullName>
    </alternativeName>
    <alternativeName>
        <fullName evidence="1">NAG kinase</fullName>
        <shortName evidence="1">NAGK</shortName>
    </alternativeName>
</protein>